<name>YACG_GEOSM</name>
<keyword id="KW-0479">Metal-binding</keyword>
<keyword id="KW-0862">Zinc</keyword>
<gene>
    <name evidence="1" type="primary">yacG</name>
    <name type="ordered locus">GM21_1943</name>
</gene>
<evidence type="ECO:0000255" key="1">
    <source>
        <dbReference type="HAMAP-Rule" id="MF_00649"/>
    </source>
</evidence>
<evidence type="ECO:0000256" key="2">
    <source>
        <dbReference type="SAM" id="MobiDB-lite"/>
    </source>
</evidence>
<feature type="chain" id="PRO_1000212399" description="DNA gyrase inhibitor YacG">
    <location>
        <begin position="1"/>
        <end position="62"/>
    </location>
</feature>
<feature type="region of interest" description="Disordered" evidence="2">
    <location>
        <begin position="43"/>
        <end position="62"/>
    </location>
</feature>
<feature type="compositionally biased region" description="Basic and acidic residues" evidence="2">
    <location>
        <begin position="43"/>
        <end position="52"/>
    </location>
</feature>
<feature type="binding site" evidence="1">
    <location>
        <position position="9"/>
    </location>
    <ligand>
        <name>Zn(2+)</name>
        <dbReference type="ChEBI" id="CHEBI:29105"/>
    </ligand>
</feature>
<feature type="binding site" evidence="1">
    <location>
        <position position="12"/>
    </location>
    <ligand>
        <name>Zn(2+)</name>
        <dbReference type="ChEBI" id="CHEBI:29105"/>
    </ligand>
</feature>
<feature type="binding site" evidence="1">
    <location>
        <position position="27"/>
    </location>
    <ligand>
        <name>Zn(2+)</name>
        <dbReference type="ChEBI" id="CHEBI:29105"/>
    </ligand>
</feature>
<feature type="binding site" evidence="1">
    <location>
        <position position="31"/>
    </location>
    <ligand>
        <name>Zn(2+)</name>
        <dbReference type="ChEBI" id="CHEBI:29105"/>
    </ligand>
</feature>
<protein>
    <recommendedName>
        <fullName evidence="1">DNA gyrase inhibitor YacG</fullName>
    </recommendedName>
</protein>
<comment type="function">
    <text evidence="1">Inhibits all the catalytic activities of DNA gyrase by preventing its interaction with DNA. Acts by binding directly to the C-terminal domain of GyrB, which probably disrupts DNA binding by the gyrase.</text>
</comment>
<comment type="cofactor">
    <cofactor evidence="1">
        <name>Zn(2+)</name>
        <dbReference type="ChEBI" id="CHEBI:29105"/>
    </cofactor>
    <text evidence="1">Binds 1 zinc ion.</text>
</comment>
<comment type="subunit">
    <text evidence="1">Interacts with GyrB.</text>
</comment>
<comment type="similarity">
    <text evidence="1">Belongs to the DNA gyrase inhibitor YacG family.</text>
</comment>
<reference key="1">
    <citation type="submission" date="2009-07" db="EMBL/GenBank/DDBJ databases">
        <title>Complete sequence of Geobacter sp. M21.</title>
        <authorList>
            <consortium name="US DOE Joint Genome Institute"/>
            <person name="Lucas S."/>
            <person name="Copeland A."/>
            <person name="Lapidus A."/>
            <person name="Glavina del Rio T."/>
            <person name="Dalin E."/>
            <person name="Tice H."/>
            <person name="Bruce D."/>
            <person name="Goodwin L."/>
            <person name="Pitluck S."/>
            <person name="Saunders E."/>
            <person name="Brettin T."/>
            <person name="Detter J.C."/>
            <person name="Han C."/>
            <person name="Larimer F."/>
            <person name="Land M."/>
            <person name="Hauser L."/>
            <person name="Kyrpides N."/>
            <person name="Ovchinnikova G."/>
            <person name="Lovley D."/>
        </authorList>
    </citation>
    <scope>NUCLEOTIDE SEQUENCE [LARGE SCALE GENOMIC DNA]</scope>
    <source>
        <strain>M21</strain>
    </source>
</reference>
<dbReference type="EMBL" id="CP001661">
    <property type="protein sequence ID" value="ACT17996.1"/>
    <property type="molecule type" value="Genomic_DNA"/>
</dbReference>
<dbReference type="SMR" id="C6E808"/>
<dbReference type="STRING" id="443144.GM21_1943"/>
<dbReference type="KEGG" id="gem:GM21_1943"/>
<dbReference type="eggNOG" id="COG3024">
    <property type="taxonomic scope" value="Bacteria"/>
</dbReference>
<dbReference type="HOGENOM" id="CLU_178280_3_2_7"/>
<dbReference type="OrthoDB" id="9809663at2"/>
<dbReference type="GO" id="GO:0008270">
    <property type="term" value="F:zinc ion binding"/>
    <property type="evidence" value="ECO:0007669"/>
    <property type="project" value="InterPro"/>
</dbReference>
<dbReference type="GO" id="GO:0006355">
    <property type="term" value="P:regulation of DNA-templated transcription"/>
    <property type="evidence" value="ECO:0007669"/>
    <property type="project" value="InterPro"/>
</dbReference>
<dbReference type="Gene3D" id="3.30.50.10">
    <property type="entry name" value="Erythroid Transcription Factor GATA-1, subunit A"/>
    <property type="match status" value="1"/>
</dbReference>
<dbReference type="HAMAP" id="MF_00649">
    <property type="entry name" value="DNA_gyrase_inhibitor_YacG"/>
    <property type="match status" value="1"/>
</dbReference>
<dbReference type="InterPro" id="IPR005584">
    <property type="entry name" value="DNA_gyrase_inhibitor_YacG"/>
</dbReference>
<dbReference type="InterPro" id="IPR013088">
    <property type="entry name" value="Znf_NHR/GATA"/>
</dbReference>
<dbReference type="PANTHER" id="PTHR36150">
    <property type="entry name" value="DNA GYRASE INHIBITOR YACG"/>
    <property type="match status" value="1"/>
</dbReference>
<dbReference type="PANTHER" id="PTHR36150:SF1">
    <property type="entry name" value="DNA GYRASE INHIBITOR YACG"/>
    <property type="match status" value="1"/>
</dbReference>
<dbReference type="Pfam" id="PF03884">
    <property type="entry name" value="YacG"/>
    <property type="match status" value="1"/>
</dbReference>
<dbReference type="SUPFAM" id="SSF57716">
    <property type="entry name" value="Glucocorticoid receptor-like (DNA-binding domain)"/>
    <property type="match status" value="1"/>
</dbReference>
<organism>
    <name type="scientific">Geobacter sp. (strain M21)</name>
    <dbReference type="NCBI Taxonomy" id="443144"/>
    <lineage>
        <taxon>Bacteria</taxon>
        <taxon>Pseudomonadati</taxon>
        <taxon>Thermodesulfobacteriota</taxon>
        <taxon>Desulfuromonadia</taxon>
        <taxon>Geobacterales</taxon>
        <taxon>Geobacteraceae</taxon>
        <taxon>Geobacter</taxon>
    </lineage>
</organism>
<sequence>MNAITTIKCPQCRKETTLAGNPYRPFCSQRCKMIDLGTWADEGYRIPGEKAPESGGEEPGDE</sequence>
<accession>C6E808</accession>
<proteinExistence type="inferred from homology"/>